<feature type="chain" id="PRO_0000413979" description="Trehalase">
    <location>
        <begin position="1"/>
        <end position="668"/>
    </location>
</feature>
<feature type="region of interest" description="Disordered" evidence="1">
    <location>
        <begin position="1"/>
        <end position="23"/>
    </location>
</feature>
<comment type="function">
    <text evidence="2">Catalyzes the hydrolysis of alpha,alpha-trehalose into two molecules of D-glucose. Does not hydrolyze maltose, isomaltose, sucrose, cellobiose, p-nitrophenyl-alpha-D-glucopyranoside, and methyl-alpha-D-glucopyranoside. Is also inactive on alpha,beta-trehalose, beta,beta-trehalose, alpha,alpha-trehalose-6,6'-dibehenate, trehalulose, nigerose, and trehalose dimycolate.</text>
</comment>
<comment type="catalytic activity">
    <reaction evidence="2">
        <text>alpha,alpha-trehalose + H2O = alpha-D-glucose + beta-D-glucose</text>
        <dbReference type="Rhea" id="RHEA:32675"/>
        <dbReference type="ChEBI" id="CHEBI:15377"/>
        <dbReference type="ChEBI" id="CHEBI:15903"/>
        <dbReference type="ChEBI" id="CHEBI:16551"/>
        <dbReference type="ChEBI" id="CHEBI:17925"/>
        <dbReference type="EC" id="3.2.1.28"/>
    </reaction>
</comment>
<comment type="cofactor">
    <cofactor evidence="2">
        <name>Mg(2+)</name>
        <dbReference type="ChEBI" id="CHEBI:18420"/>
    </cofactor>
    <text evidence="2">Shows an absolute requirement for Mg(2+) for activity. Mg(2+) cannot be replaced by Ca(2+), Mn(2+) or Zn(2+).</text>
</comment>
<comment type="cofactor">
    <cofactor evidence="2">
        <name>phosphate</name>
        <dbReference type="ChEBI" id="CHEBI:43474"/>
    </cofactor>
    <text evidence="2">Shows an absolute requirement for inorganic phosphate for activity. The function of the phosphate may involve stabilizing the protein conformation and/or initiating protein aggregation.</text>
</comment>
<comment type="activity regulation">
    <text evidence="2">Inhibited by pyrophosphate and polyphosphates. Also competitively inhibited by validoxylamine and castanospermine, but not by trehazolin.</text>
</comment>
<comment type="biophysicochemical properties">
    <kinetics>
        <KM evidence="2">20 mM for alpha,alpha-trehalose</KM>
    </kinetics>
    <phDependence>
        <text evidence="2">Optimum pH is 7.1. The trehalase activity drops sharply at pH values of 6.5 and below, as well as at pH values of 8.0 and above.</text>
    </phDependence>
</comment>
<comment type="pathway">
    <text>Glycan degradation; trehalose degradation; D-glucose from alpha,alpha-trehalose: step 1/1.</text>
</comment>
<comment type="subunit">
    <text evidence="2">Homomultimer of 20 or more subunits.</text>
</comment>
<comment type="similarity">
    <text evidence="3">Belongs to the glycosyl hydrolase 15 family.</text>
</comment>
<name>TREH_MYCS2</name>
<sequence length="668" mass="74690">MVLQQTEPTDGADRKASDGPLTVTAPVPYAAGPTLRNPFPPIADYGFLSDCETTCLISSAGSVEWLCVPRPDSPSVFGAILDRGAGHFRLGPYGVSVPAARRYLPGSLILETTWQTHTGWLIVRDALVMGPWHDIDTRSRTHRRTPMDWDAEHILLRTVRCVSGTVELVMSCEPAFDYHRVSATWEYSGPAYGEAIARASRNPDSHPTLRLTTNLRIGIEGREARARTRLTEGDNVFVALSWSKHPAPQTYEEAADKMWKTSEAWRQWINVGDFPDHPWRAYLQRSALTLKGLTYSPTGALLAAPTTSLPETPQGERNWDYRYSWIRDSTFALWGLYTLGLDREADDFFSFIADVSGANNGERHPLQVMYGVGGERSLVEEELHHLSGYDNSRPVRIGNGAYNQRQHDIWGTMLDSVYLHAKSREQIPDALWPVLKNQVEEAIKHWKEPDRGIWEVRGEPQHFTSSKIMCWVALDRGSKLAELQGEKSYAQQWRAIAEEIKADVLARGVDKRGVLTQRYGDDALDASLLLAVLTRFLPADDPRIRATVLAIADELTEDGLVLRYRVEETDDGLAGEEGTFTICSFWLVSALVEIGEISRAKHLCERLLSFASPLHLYAEEIEPRTGRHLGNFPQAFTHLALINAVVHVIRAEEEADSSGVFVPANAPM</sequence>
<organism>
    <name type="scientific">Mycolicibacterium smegmatis (strain ATCC 700084 / mc(2)155)</name>
    <name type="common">Mycobacterium smegmatis</name>
    <dbReference type="NCBI Taxonomy" id="246196"/>
    <lineage>
        <taxon>Bacteria</taxon>
        <taxon>Bacillati</taxon>
        <taxon>Actinomycetota</taxon>
        <taxon>Actinomycetes</taxon>
        <taxon>Mycobacteriales</taxon>
        <taxon>Mycobacteriaceae</taxon>
        <taxon>Mycolicibacterium</taxon>
    </lineage>
</organism>
<accession>A0R0W9</accession>
<accession>I7GCG8</accession>
<evidence type="ECO:0000256" key="1">
    <source>
        <dbReference type="SAM" id="MobiDB-lite"/>
    </source>
</evidence>
<evidence type="ECO:0000269" key="2">
    <source>
    </source>
</evidence>
<evidence type="ECO:0000305" key="3"/>
<proteinExistence type="evidence at protein level"/>
<protein>
    <recommendedName>
        <fullName>Trehalase</fullName>
        <ecNumber>3.2.1.28</ecNumber>
    </recommendedName>
    <alternativeName>
        <fullName>Alpha,alpha-trehalase</fullName>
    </alternativeName>
    <alternativeName>
        <fullName>Alpha,alpha-trehalose glucohydrolase</fullName>
    </alternativeName>
</protein>
<gene>
    <name type="ordered locus">MSMEG_4535</name>
    <name type="ordered locus">MSMEI_4422</name>
    <name type="ORF">MSMEG4528</name>
</gene>
<dbReference type="EC" id="3.2.1.28"/>
<dbReference type="EMBL" id="CP000480">
    <property type="protein sequence ID" value="ABK72415.1"/>
    <property type="molecule type" value="Genomic_DNA"/>
</dbReference>
<dbReference type="EMBL" id="CP001663">
    <property type="protein sequence ID" value="AFP40876.1"/>
    <property type="molecule type" value="Genomic_DNA"/>
</dbReference>
<dbReference type="RefSeq" id="WP_011729900.1">
    <property type="nucleotide sequence ID" value="NZ_SIJM01000052.1"/>
</dbReference>
<dbReference type="RefSeq" id="YP_888807.1">
    <property type="nucleotide sequence ID" value="NC_008596.1"/>
</dbReference>
<dbReference type="SMR" id="A0R0W9"/>
<dbReference type="STRING" id="246196.MSMEG_4535"/>
<dbReference type="CAZy" id="GH15">
    <property type="family name" value="Glycoside Hydrolase Family 15"/>
</dbReference>
<dbReference type="PaxDb" id="246196-MSMEI_4422"/>
<dbReference type="KEGG" id="msb:LJ00_22440"/>
<dbReference type="KEGG" id="msg:MSMEI_4422"/>
<dbReference type="KEGG" id="msm:MSMEG_4535"/>
<dbReference type="PATRIC" id="fig|246196.19.peg.4437"/>
<dbReference type="eggNOG" id="COG3387">
    <property type="taxonomic scope" value="Bacteria"/>
</dbReference>
<dbReference type="OrthoDB" id="3902805at2"/>
<dbReference type="UniPathway" id="UPA00300">
    <property type="reaction ID" value="UER00535"/>
</dbReference>
<dbReference type="Proteomes" id="UP000000757">
    <property type="component" value="Chromosome"/>
</dbReference>
<dbReference type="Proteomes" id="UP000006158">
    <property type="component" value="Chromosome"/>
</dbReference>
<dbReference type="GO" id="GO:0004555">
    <property type="term" value="F:alpha,alpha-trehalase activity"/>
    <property type="evidence" value="ECO:0000314"/>
    <property type="project" value="UniProtKB"/>
</dbReference>
<dbReference type="GO" id="GO:0042301">
    <property type="term" value="F:phosphate ion binding"/>
    <property type="evidence" value="ECO:0000314"/>
    <property type="project" value="UniProtKB"/>
</dbReference>
<dbReference type="GO" id="GO:0005993">
    <property type="term" value="P:trehalose catabolic process"/>
    <property type="evidence" value="ECO:0000314"/>
    <property type="project" value="UniProtKB"/>
</dbReference>
<dbReference type="FunFam" id="1.50.10.10:FF:000005">
    <property type="entry name" value="Glycosyl hydrolase, glucoamylase"/>
    <property type="match status" value="1"/>
</dbReference>
<dbReference type="Gene3D" id="1.50.10.10">
    <property type="match status" value="1"/>
</dbReference>
<dbReference type="InterPro" id="IPR008928">
    <property type="entry name" value="6-hairpin_glycosidase_sf"/>
</dbReference>
<dbReference type="InterPro" id="IPR012341">
    <property type="entry name" value="6hp_glycosidase-like_sf"/>
</dbReference>
<dbReference type="InterPro" id="IPR011613">
    <property type="entry name" value="GH15-like"/>
</dbReference>
<dbReference type="InterPro" id="IPR045582">
    <property type="entry name" value="Trehalase-like_N"/>
</dbReference>
<dbReference type="PANTHER" id="PTHR31616">
    <property type="entry name" value="TREHALASE"/>
    <property type="match status" value="1"/>
</dbReference>
<dbReference type="PANTHER" id="PTHR31616:SF10">
    <property type="entry name" value="TREHALASE"/>
    <property type="match status" value="1"/>
</dbReference>
<dbReference type="Pfam" id="PF00723">
    <property type="entry name" value="Glyco_hydro_15"/>
    <property type="match status" value="1"/>
</dbReference>
<dbReference type="Pfam" id="PF19291">
    <property type="entry name" value="TREH_N"/>
    <property type="match status" value="1"/>
</dbReference>
<dbReference type="SUPFAM" id="SSF48208">
    <property type="entry name" value="Six-hairpin glycosidases"/>
    <property type="match status" value="1"/>
</dbReference>
<reference key="1">
    <citation type="submission" date="2006-10" db="EMBL/GenBank/DDBJ databases">
        <authorList>
            <person name="Fleischmann R.D."/>
            <person name="Dodson R.J."/>
            <person name="Haft D.H."/>
            <person name="Merkel J.S."/>
            <person name="Nelson W.C."/>
            <person name="Fraser C.M."/>
        </authorList>
    </citation>
    <scope>NUCLEOTIDE SEQUENCE [LARGE SCALE GENOMIC DNA]</scope>
    <source>
        <strain>ATCC 700084 / mc(2)155</strain>
    </source>
</reference>
<reference key="2">
    <citation type="journal article" date="2007" name="Genome Biol.">
        <title>Interrupted coding sequences in Mycobacterium smegmatis: authentic mutations or sequencing errors?</title>
        <authorList>
            <person name="Deshayes C."/>
            <person name="Perrodou E."/>
            <person name="Gallien S."/>
            <person name="Euphrasie D."/>
            <person name="Schaeffer C."/>
            <person name="Van-Dorsselaer A."/>
            <person name="Poch O."/>
            <person name="Lecompte O."/>
            <person name="Reyrat J.-M."/>
        </authorList>
    </citation>
    <scope>NUCLEOTIDE SEQUENCE [LARGE SCALE GENOMIC DNA]</scope>
    <source>
        <strain>ATCC 700084 / mc(2)155</strain>
    </source>
</reference>
<reference key="3">
    <citation type="journal article" date="2009" name="Genome Res.">
        <title>Ortho-proteogenomics: multiple proteomes investigation through orthology and a new MS-based protocol.</title>
        <authorList>
            <person name="Gallien S."/>
            <person name="Perrodou E."/>
            <person name="Carapito C."/>
            <person name="Deshayes C."/>
            <person name="Reyrat J.-M."/>
            <person name="Van Dorsselaer A."/>
            <person name="Poch O."/>
            <person name="Schaeffer C."/>
            <person name="Lecompte O."/>
        </authorList>
    </citation>
    <scope>NUCLEOTIDE SEQUENCE [LARGE SCALE GENOMIC DNA]</scope>
    <source>
        <strain>ATCC 700084 / mc(2)155</strain>
    </source>
</reference>
<reference key="4">
    <citation type="journal article" date="2007" name="FEBS J.">
        <title>A novel trehalase from Mycobacterium smegmatis - purification, properties, requirements.</title>
        <authorList>
            <person name="Carroll J.D."/>
            <person name="Pastuszak I."/>
            <person name="Edavana V.K."/>
            <person name="Pan Y.T."/>
            <person name="Elbein A.D."/>
        </authorList>
    </citation>
    <scope>FUNCTION</scope>
    <scope>CATALYTIC ACTIVITY</scope>
    <scope>COFACTOR</scope>
    <scope>SUBSTRATE SPECIFICITY</scope>
    <scope>ACTIVITY REGULATION</scope>
    <scope>BIOPHYSICOCHEMICAL PROPERTIES</scope>
    <scope>SUBUNIT</scope>
    <scope>IDENTIFICATION BY MASS SPECTROMETRY</scope>
    <source>
        <strain>ATCC 700084 / mc(2)155</strain>
    </source>
</reference>
<keyword id="KW-0119">Carbohydrate metabolism</keyword>
<keyword id="KW-0326">Glycosidase</keyword>
<keyword id="KW-0378">Hydrolase</keyword>
<keyword id="KW-0460">Magnesium</keyword>
<keyword id="KW-1185">Reference proteome</keyword>